<accession>Q254S9</accession>
<proteinExistence type="inferred from homology"/>
<reference key="1">
    <citation type="journal article" date="2006" name="DNA Res.">
        <title>Genome sequence of the cat pathogen, Chlamydophila felis.</title>
        <authorList>
            <person name="Azuma Y."/>
            <person name="Hirakawa H."/>
            <person name="Yamashita A."/>
            <person name="Cai Y."/>
            <person name="Rahman M.A."/>
            <person name="Suzuki H."/>
            <person name="Mitaku S."/>
            <person name="Toh H."/>
            <person name="Goto S."/>
            <person name="Murakami T."/>
            <person name="Sugi K."/>
            <person name="Hayashi H."/>
            <person name="Fukushi H."/>
            <person name="Hattori M."/>
            <person name="Kuhara S."/>
            <person name="Shirai M."/>
        </authorList>
    </citation>
    <scope>NUCLEOTIDE SEQUENCE [LARGE SCALE GENOMIC DNA]</scope>
    <source>
        <strain>Fe/C-56</strain>
    </source>
</reference>
<protein>
    <recommendedName>
        <fullName evidence="1">N-(5'-phosphoribosyl)anthranilate isomerase</fullName>
        <shortName evidence="1">PRAI</shortName>
        <ecNumber evidence="1">5.3.1.24</ecNumber>
    </recommendedName>
</protein>
<dbReference type="EC" id="5.3.1.24" evidence="1"/>
<dbReference type="EMBL" id="AP006861">
    <property type="protein sequence ID" value="BAE81209.1"/>
    <property type="molecule type" value="Genomic_DNA"/>
</dbReference>
<dbReference type="RefSeq" id="WP_011457989.1">
    <property type="nucleotide sequence ID" value="NC_007899.1"/>
</dbReference>
<dbReference type="SMR" id="Q254S9"/>
<dbReference type="STRING" id="264202.CF0437"/>
<dbReference type="KEGG" id="cfe:CF0437"/>
<dbReference type="eggNOG" id="COG0135">
    <property type="taxonomic scope" value="Bacteria"/>
</dbReference>
<dbReference type="HOGENOM" id="CLU_076364_0_1_0"/>
<dbReference type="OrthoDB" id="9786954at2"/>
<dbReference type="UniPathway" id="UPA00035">
    <property type="reaction ID" value="UER00042"/>
</dbReference>
<dbReference type="Proteomes" id="UP000001260">
    <property type="component" value="Chromosome"/>
</dbReference>
<dbReference type="GO" id="GO:0004640">
    <property type="term" value="F:phosphoribosylanthranilate isomerase activity"/>
    <property type="evidence" value="ECO:0007669"/>
    <property type="project" value="UniProtKB-UniRule"/>
</dbReference>
<dbReference type="GO" id="GO:0000162">
    <property type="term" value="P:L-tryptophan biosynthetic process"/>
    <property type="evidence" value="ECO:0007669"/>
    <property type="project" value="UniProtKB-UniRule"/>
</dbReference>
<dbReference type="CDD" id="cd00405">
    <property type="entry name" value="PRAI"/>
    <property type="match status" value="1"/>
</dbReference>
<dbReference type="Gene3D" id="3.20.20.70">
    <property type="entry name" value="Aldolase class I"/>
    <property type="match status" value="1"/>
</dbReference>
<dbReference type="HAMAP" id="MF_00135">
    <property type="entry name" value="PRAI"/>
    <property type="match status" value="1"/>
</dbReference>
<dbReference type="InterPro" id="IPR013785">
    <property type="entry name" value="Aldolase_TIM"/>
</dbReference>
<dbReference type="InterPro" id="IPR001240">
    <property type="entry name" value="PRAI_dom"/>
</dbReference>
<dbReference type="InterPro" id="IPR011060">
    <property type="entry name" value="RibuloseP-bd_barrel"/>
</dbReference>
<dbReference type="InterPro" id="IPR044643">
    <property type="entry name" value="TrpF_fam"/>
</dbReference>
<dbReference type="NCBIfam" id="NF002303">
    <property type="entry name" value="PRK01222.2-3"/>
    <property type="match status" value="1"/>
</dbReference>
<dbReference type="PANTHER" id="PTHR42894">
    <property type="entry name" value="N-(5'-PHOSPHORIBOSYL)ANTHRANILATE ISOMERASE"/>
    <property type="match status" value="1"/>
</dbReference>
<dbReference type="PANTHER" id="PTHR42894:SF1">
    <property type="entry name" value="N-(5'-PHOSPHORIBOSYL)ANTHRANILATE ISOMERASE"/>
    <property type="match status" value="1"/>
</dbReference>
<dbReference type="Pfam" id="PF00697">
    <property type="entry name" value="PRAI"/>
    <property type="match status" value="1"/>
</dbReference>
<dbReference type="SUPFAM" id="SSF51366">
    <property type="entry name" value="Ribulose-phoshate binding barrel"/>
    <property type="match status" value="1"/>
</dbReference>
<organism>
    <name type="scientific">Chlamydia felis (strain Fe/C-56)</name>
    <name type="common">Chlamydophila felis</name>
    <dbReference type="NCBI Taxonomy" id="264202"/>
    <lineage>
        <taxon>Bacteria</taxon>
        <taxon>Pseudomonadati</taxon>
        <taxon>Chlamydiota</taxon>
        <taxon>Chlamydiia</taxon>
        <taxon>Chlamydiales</taxon>
        <taxon>Chlamydiaceae</taxon>
        <taxon>Chlamydia/Chlamydophila group</taxon>
        <taxon>Chlamydia</taxon>
    </lineage>
</organism>
<feature type="chain" id="PRO_1000197089" description="N-(5'-phosphoribosyl)anthranilate isomerase">
    <location>
        <begin position="1"/>
        <end position="206"/>
    </location>
</feature>
<gene>
    <name evidence="1" type="primary">trpF</name>
    <name type="ordered locus">CF0437</name>
</gene>
<sequence>MKVKICGVTHPEDAEYAALLGADYIGMIFAEKSKRKTSLSMAKSITNTTKRLGAEPVGVFVEQTTDQIIAICEQTGIKTVQLHNSFPSGSLEKLLRDYSIIYAISVRENGDVCHPQSLPPKVIPLYDTEKGGTGKQFNWKAFSSPRDTFWMLAGGLNPANIEEAIATLHPNGVDVATGVEFPNKTRKDPDLLKAFIQSAKILGEKI</sequence>
<evidence type="ECO:0000255" key="1">
    <source>
        <dbReference type="HAMAP-Rule" id="MF_00135"/>
    </source>
</evidence>
<name>TRPF_CHLFF</name>
<comment type="catalytic activity">
    <reaction evidence="1">
        <text>N-(5-phospho-beta-D-ribosyl)anthranilate = 1-(2-carboxyphenylamino)-1-deoxy-D-ribulose 5-phosphate</text>
        <dbReference type="Rhea" id="RHEA:21540"/>
        <dbReference type="ChEBI" id="CHEBI:18277"/>
        <dbReference type="ChEBI" id="CHEBI:58613"/>
        <dbReference type="EC" id="5.3.1.24"/>
    </reaction>
</comment>
<comment type="pathway">
    <text evidence="1">Amino-acid biosynthesis; L-tryptophan biosynthesis; L-tryptophan from chorismate: step 3/5.</text>
</comment>
<comment type="similarity">
    <text evidence="1">Belongs to the TrpF family.</text>
</comment>
<keyword id="KW-0028">Amino-acid biosynthesis</keyword>
<keyword id="KW-0057">Aromatic amino acid biosynthesis</keyword>
<keyword id="KW-0413">Isomerase</keyword>
<keyword id="KW-0822">Tryptophan biosynthesis</keyword>